<evidence type="ECO:0000255" key="1">
    <source>
        <dbReference type="HAMAP-Rule" id="MF_00182"/>
    </source>
</evidence>
<gene>
    <name evidence="1" type="primary">fmt</name>
    <name type="ordered locus">CHY_1483</name>
</gene>
<feature type="chain" id="PRO_1000077291" description="Methionyl-tRNA formyltransferase">
    <location>
        <begin position="1"/>
        <end position="308"/>
    </location>
</feature>
<feature type="binding site" evidence="1">
    <location>
        <begin position="107"/>
        <end position="110"/>
    </location>
    <ligand>
        <name>(6S)-5,6,7,8-tetrahydrofolate</name>
        <dbReference type="ChEBI" id="CHEBI:57453"/>
    </ligand>
</feature>
<accession>Q3AC19</accession>
<protein>
    <recommendedName>
        <fullName evidence="1">Methionyl-tRNA formyltransferase</fullName>
        <ecNumber evidence="1">2.1.2.9</ecNumber>
    </recommendedName>
</protein>
<reference key="1">
    <citation type="journal article" date="2005" name="PLoS Genet.">
        <title>Life in hot carbon monoxide: the complete genome sequence of Carboxydothermus hydrogenoformans Z-2901.</title>
        <authorList>
            <person name="Wu M."/>
            <person name="Ren Q."/>
            <person name="Durkin A.S."/>
            <person name="Daugherty S.C."/>
            <person name="Brinkac L.M."/>
            <person name="Dodson R.J."/>
            <person name="Madupu R."/>
            <person name="Sullivan S.A."/>
            <person name="Kolonay J.F."/>
            <person name="Nelson W.C."/>
            <person name="Tallon L.J."/>
            <person name="Jones K.M."/>
            <person name="Ulrich L.E."/>
            <person name="Gonzalez J.M."/>
            <person name="Zhulin I.B."/>
            <person name="Robb F.T."/>
            <person name="Eisen J.A."/>
        </authorList>
    </citation>
    <scope>NUCLEOTIDE SEQUENCE [LARGE SCALE GENOMIC DNA]</scope>
    <source>
        <strain>ATCC BAA-161 / DSM 6008 / Z-2901</strain>
    </source>
</reference>
<dbReference type="EC" id="2.1.2.9" evidence="1"/>
<dbReference type="EMBL" id="CP000141">
    <property type="protein sequence ID" value="ABB14025.1"/>
    <property type="molecule type" value="Genomic_DNA"/>
</dbReference>
<dbReference type="RefSeq" id="WP_011344390.1">
    <property type="nucleotide sequence ID" value="NC_007503.1"/>
</dbReference>
<dbReference type="SMR" id="Q3AC19"/>
<dbReference type="FunCoup" id="Q3AC19">
    <property type="interactions" value="408"/>
</dbReference>
<dbReference type="STRING" id="246194.CHY_1483"/>
<dbReference type="KEGG" id="chy:CHY_1483"/>
<dbReference type="eggNOG" id="COG0223">
    <property type="taxonomic scope" value="Bacteria"/>
</dbReference>
<dbReference type="HOGENOM" id="CLU_033347_1_1_9"/>
<dbReference type="InParanoid" id="Q3AC19"/>
<dbReference type="OrthoDB" id="9802815at2"/>
<dbReference type="Proteomes" id="UP000002706">
    <property type="component" value="Chromosome"/>
</dbReference>
<dbReference type="GO" id="GO:0005829">
    <property type="term" value="C:cytosol"/>
    <property type="evidence" value="ECO:0007669"/>
    <property type="project" value="TreeGrafter"/>
</dbReference>
<dbReference type="GO" id="GO:0004479">
    <property type="term" value="F:methionyl-tRNA formyltransferase activity"/>
    <property type="evidence" value="ECO:0007669"/>
    <property type="project" value="UniProtKB-UniRule"/>
</dbReference>
<dbReference type="CDD" id="cd08646">
    <property type="entry name" value="FMT_core_Met-tRNA-FMT_N"/>
    <property type="match status" value="1"/>
</dbReference>
<dbReference type="CDD" id="cd08704">
    <property type="entry name" value="Met_tRNA_FMT_C"/>
    <property type="match status" value="1"/>
</dbReference>
<dbReference type="FunFam" id="3.40.50.12230:FF:000001">
    <property type="entry name" value="Methionyl-tRNA formyltransferase"/>
    <property type="match status" value="1"/>
</dbReference>
<dbReference type="Gene3D" id="3.10.25.10">
    <property type="entry name" value="Formyl transferase, C-terminal domain"/>
    <property type="match status" value="1"/>
</dbReference>
<dbReference type="Gene3D" id="3.40.50.170">
    <property type="entry name" value="Formyl transferase, N-terminal domain"/>
    <property type="match status" value="1"/>
</dbReference>
<dbReference type="HAMAP" id="MF_00182">
    <property type="entry name" value="Formyl_trans"/>
    <property type="match status" value="1"/>
</dbReference>
<dbReference type="InterPro" id="IPR005794">
    <property type="entry name" value="Fmt"/>
</dbReference>
<dbReference type="InterPro" id="IPR005793">
    <property type="entry name" value="Formyl_trans_C"/>
</dbReference>
<dbReference type="InterPro" id="IPR037022">
    <property type="entry name" value="Formyl_trans_C_sf"/>
</dbReference>
<dbReference type="InterPro" id="IPR002376">
    <property type="entry name" value="Formyl_transf_N"/>
</dbReference>
<dbReference type="InterPro" id="IPR036477">
    <property type="entry name" value="Formyl_transf_N_sf"/>
</dbReference>
<dbReference type="InterPro" id="IPR011034">
    <property type="entry name" value="Formyl_transferase-like_C_sf"/>
</dbReference>
<dbReference type="InterPro" id="IPR001555">
    <property type="entry name" value="GART_AS"/>
</dbReference>
<dbReference type="InterPro" id="IPR044135">
    <property type="entry name" value="Met-tRNA-FMT_C"/>
</dbReference>
<dbReference type="InterPro" id="IPR041711">
    <property type="entry name" value="Met-tRNA-FMT_N"/>
</dbReference>
<dbReference type="NCBIfam" id="TIGR00460">
    <property type="entry name" value="fmt"/>
    <property type="match status" value="1"/>
</dbReference>
<dbReference type="PANTHER" id="PTHR11138">
    <property type="entry name" value="METHIONYL-TRNA FORMYLTRANSFERASE"/>
    <property type="match status" value="1"/>
</dbReference>
<dbReference type="PANTHER" id="PTHR11138:SF5">
    <property type="entry name" value="METHIONYL-TRNA FORMYLTRANSFERASE, MITOCHONDRIAL"/>
    <property type="match status" value="1"/>
</dbReference>
<dbReference type="Pfam" id="PF02911">
    <property type="entry name" value="Formyl_trans_C"/>
    <property type="match status" value="1"/>
</dbReference>
<dbReference type="Pfam" id="PF00551">
    <property type="entry name" value="Formyl_trans_N"/>
    <property type="match status" value="1"/>
</dbReference>
<dbReference type="SUPFAM" id="SSF50486">
    <property type="entry name" value="FMT C-terminal domain-like"/>
    <property type="match status" value="1"/>
</dbReference>
<dbReference type="SUPFAM" id="SSF53328">
    <property type="entry name" value="Formyltransferase"/>
    <property type="match status" value="1"/>
</dbReference>
<dbReference type="PROSITE" id="PS00373">
    <property type="entry name" value="GART"/>
    <property type="match status" value="1"/>
</dbReference>
<proteinExistence type="inferred from homology"/>
<name>FMT_CARHZ</name>
<comment type="function">
    <text evidence="1">Attaches a formyl group to the free amino group of methionyl-tRNA(fMet). The formyl group appears to play a dual role in the initiator identity of N-formylmethionyl-tRNA by promoting its recognition by IF2 and preventing the misappropriation of this tRNA by the elongation apparatus.</text>
</comment>
<comment type="catalytic activity">
    <reaction evidence="1">
        <text>L-methionyl-tRNA(fMet) + (6R)-10-formyltetrahydrofolate = N-formyl-L-methionyl-tRNA(fMet) + (6S)-5,6,7,8-tetrahydrofolate + H(+)</text>
        <dbReference type="Rhea" id="RHEA:24380"/>
        <dbReference type="Rhea" id="RHEA-COMP:9952"/>
        <dbReference type="Rhea" id="RHEA-COMP:9953"/>
        <dbReference type="ChEBI" id="CHEBI:15378"/>
        <dbReference type="ChEBI" id="CHEBI:57453"/>
        <dbReference type="ChEBI" id="CHEBI:78530"/>
        <dbReference type="ChEBI" id="CHEBI:78844"/>
        <dbReference type="ChEBI" id="CHEBI:195366"/>
        <dbReference type="EC" id="2.1.2.9"/>
    </reaction>
</comment>
<comment type="similarity">
    <text evidence="1">Belongs to the Fmt family.</text>
</comment>
<sequence>MRIVYMGTPEFAVKPLAKLISHHEVALVVTKPDAAAGRGKKVISSPVKLFAQENHLRVITPLKFNEEVYQEILAVKPEVIVVAAYGKLLPREILNIPPYGCLNIHASLLPFYRGAAPIERCLMAGEKETGITIMFMDEGLDTGDIALQEKVAINQEITGGELRKILAEIGADLIIEALKRLREGGLPRVPQDHQLATYAPPLKKEDEIIHWADSAEKIRNQIRALNPVPGAYTVFRGKKIKIWKAKVGEFSGKKPGEIIFADRKNGFLVATGERGLQILELQPEGGKKMSWESFLNGYRPLVGETFEC</sequence>
<keyword id="KW-0648">Protein biosynthesis</keyword>
<keyword id="KW-1185">Reference proteome</keyword>
<keyword id="KW-0808">Transferase</keyword>
<organism>
    <name type="scientific">Carboxydothermus hydrogenoformans (strain ATCC BAA-161 / DSM 6008 / Z-2901)</name>
    <dbReference type="NCBI Taxonomy" id="246194"/>
    <lineage>
        <taxon>Bacteria</taxon>
        <taxon>Bacillati</taxon>
        <taxon>Bacillota</taxon>
        <taxon>Clostridia</taxon>
        <taxon>Thermoanaerobacterales</taxon>
        <taxon>Thermoanaerobacteraceae</taxon>
        <taxon>Carboxydothermus</taxon>
    </lineage>
</organism>